<gene>
    <name evidence="5" type="primary">OMT</name>
</gene>
<comment type="function">
    <text evidence="4">O-methyltransferase involved in the biosynthesis of ipecac and benzylisoquinoline monoterpenoid-isoquinoline alkaloids natural products, starting by the condensation of dopamine and secologanin, and including emetine and cephaeline, drugs used both as anti-protozoal (e.g. treatment of ameobiasis) and as emetic agents (PubMed:21228475). Catalyzes successively the 7'-O-methylation of 7'-O-demethylcephaeline to produce cephaeline, and its 6'-O-methylation to produce emetine (PubMed:21228475).</text>
</comment>
<comment type="catalytic activity">
    <reaction evidence="4">
        <text>7'-O-demethylcephaeline + S-adenosyl-L-methionine = cephaeline + S-adenosyl-L-homocysteine + H(+)</text>
        <dbReference type="Rhea" id="RHEA:80555"/>
        <dbReference type="ChEBI" id="CHEBI:15378"/>
        <dbReference type="ChEBI" id="CHEBI:57856"/>
        <dbReference type="ChEBI" id="CHEBI:59789"/>
        <dbReference type="ChEBI" id="CHEBI:231587"/>
        <dbReference type="ChEBI" id="CHEBI:231589"/>
        <dbReference type="EC" id="2.1.1.395"/>
    </reaction>
    <physiologicalReaction direction="left-to-right" evidence="4">
        <dbReference type="Rhea" id="RHEA:80556"/>
    </physiologicalReaction>
</comment>
<comment type="catalytic activity">
    <reaction evidence="4">
        <text>cephaeline + S-adenosyl-L-methionine = emetine + S-adenosyl-L-homocysteine + H(+)</text>
        <dbReference type="Rhea" id="RHEA:80659"/>
        <dbReference type="ChEBI" id="CHEBI:15378"/>
        <dbReference type="ChEBI" id="CHEBI:57856"/>
        <dbReference type="ChEBI" id="CHEBI:59789"/>
        <dbReference type="ChEBI" id="CHEBI:149548"/>
        <dbReference type="ChEBI" id="CHEBI:231587"/>
        <dbReference type="EC" id="2.1.1.396"/>
    </reaction>
    <physiologicalReaction direction="left-to-right" evidence="4">
        <dbReference type="Rhea" id="RHEA:80660"/>
    </physiologicalReaction>
</comment>
<comment type="activity regulation">
    <text evidence="4">Inhibited by Co(2+), Ni(2+), Zn(2+) and Mn(2+) ions.</text>
</comment>
<comment type="biophysicochemical properties">
    <kinetics>
        <KM evidence="4">68 uM for cephaeline</KM>
        <KM evidence="4">97 uM for S-adenosyl-L-methionine</KM>
        <Vmax evidence="4">0.34 nmol/min/mg enzyme with cephaeline as substrate</Vmax>
    </kinetics>
    <phDependence>
        <text evidence="4">Optimum pH is 6.8 with cephaeline as substrate.</text>
    </phDependence>
</comment>
<comment type="pathway">
    <text evidence="4">Alkaloid biosynthesis.</text>
</comment>
<comment type="subcellular location">
    <subcellularLocation>
        <location evidence="1">Cytoplasm</location>
        <location evidence="1">Cytosol</location>
    </subcellularLocation>
</comment>
<comment type="similarity">
    <text evidence="3">Belongs to the class I-like SAM-binding methyltransferase superfamily. Cation-independent O-methyltransferase family.</text>
</comment>
<accession>E7FL15</accession>
<feature type="chain" id="PRO_0000462221" description="Cephaeline 6'-O-methyltransferase CiOMT">
    <location>
        <begin position="1"/>
        <end position="350"/>
    </location>
</feature>
<feature type="active site" description="Proton acceptor" evidence="3">
    <location>
        <position position="254"/>
    </location>
</feature>
<feature type="binding site" evidence="2 3">
    <location>
        <position position="193"/>
    </location>
    <ligand>
        <name>S-adenosyl-L-methionine</name>
        <dbReference type="ChEBI" id="CHEBI:59789"/>
    </ligand>
</feature>
<feature type="binding site" evidence="2 3">
    <location>
        <position position="216"/>
    </location>
    <ligand>
        <name>S-adenosyl-L-methionine</name>
        <dbReference type="ChEBI" id="CHEBI:59789"/>
    </ligand>
</feature>
<feature type="binding site" evidence="2 3">
    <location>
        <position position="236"/>
    </location>
    <ligand>
        <name>S-adenosyl-L-methionine</name>
        <dbReference type="ChEBI" id="CHEBI:59789"/>
    </ligand>
</feature>
<feature type="binding site" evidence="2 3">
    <location>
        <position position="237"/>
    </location>
    <ligand>
        <name>S-adenosyl-L-methionine</name>
        <dbReference type="ChEBI" id="CHEBI:59789"/>
    </ligand>
</feature>
<feature type="binding site" evidence="2 3">
    <location>
        <position position="250"/>
    </location>
    <ligand>
        <name>S-adenosyl-L-methionine</name>
        <dbReference type="ChEBI" id="CHEBI:59789"/>
    </ligand>
</feature>
<organism>
    <name type="scientific">Carapichea ipecacuanha</name>
    <name type="common">Ipecac</name>
    <name type="synonym">Callicocca ipecacuanha</name>
    <dbReference type="NCBI Taxonomy" id="77880"/>
    <lineage>
        <taxon>Eukaryota</taxon>
        <taxon>Viridiplantae</taxon>
        <taxon>Streptophyta</taxon>
        <taxon>Embryophyta</taxon>
        <taxon>Tracheophyta</taxon>
        <taxon>Spermatophyta</taxon>
        <taxon>Magnoliopsida</taxon>
        <taxon>eudicotyledons</taxon>
        <taxon>Gunneridae</taxon>
        <taxon>Pentapetalae</taxon>
        <taxon>asterids</taxon>
        <taxon>lamiids</taxon>
        <taxon>Gentianales</taxon>
        <taxon>Rubiaceae</taxon>
        <taxon>Rubioideae</taxon>
        <taxon>Palicoureeae</taxon>
        <taxon>Carapichea</taxon>
    </lineage>
</organism>
<protein>
    <recommendedName>
        <fullName evidence="5">Cephaeline 6'-O-methyltransferase CiOMT</fullName>
        <shortName evidence="5">Emetine synthase CiOMT</shortName>
        <ecNumber evidence="4">2.1.1.396</ecNumber>
    </recommendedName>
    <alternativeName>
        <fullName evidence="5">7'-O-demethylcephaeline 7'-O-methyltransferase CiOMT</fullName>
        <shortName evidence="5">Cephaeline synthase CiOMT</shortName>
        <ecNumber evidence="4">2.1.1.395</ecNumber>
    </alternativeName>
    <alternativeName>
        <fullName evidence="5 6">7'-O-demethylcephaeline/cephaeline O-methyltransferase</fullName>
        <shortName evidence="6">7'OMT</shortName>
        <shortName evidence="5">CiOMT</shortName>
    </alternativeName>
</protein>
<reference evidence="6" key="1">
    <citation type="journal article" date="2011" name="Biosci. Biotechnol. Biochem.">
        <title>Molecular cloning of an O-methyltransferase from adventitious roots of Carapichea ipecacuanha.</title>
        <authorList>
            <person name="Cheong B.E."/>
            <person name="Takemura T."/>
            <person name="Yoshimatsu K."/>
            <person name="Sato F."/>
        </authorList>
    </citation>
    <scope>NUCLEOTIDE SEQUENCE [MRNA]</scope>
    <scope>FUNCTION</scope>
    <scope>CATALYTIC ACTIVITY</scope>
    <scope>PATHWAY</scope>
    <scope>BIOPHYSICOCHEMICAL PROPERTIES</scope>
    <scope>ACTIVITY REGULATION</scope>
    <source>
        <tissue>Root</tissue>
    </source>
</reference>
<name>CIOMT_CARIP</name>
<proteinExistence type="evidence at protein level"/>
<keyword id="KW-0017">Alkaloid metabolism</keyword>
<keyword id="KW-0963">Cytoplasm</keyword>
<keyword id="KW-0489">Methyltransferase</keyword>
<keyword id="KW-0949">S-adenosyl-L-methionine</keyword>
<keyword id="KW-0808">Transferase</keyword>
<dbReference type="EC" id="2.1.1.396" evidence="4"/>
<dbReference type="EC" id="2.1.1.395" evidence="4"/>
<dbReference type="EMBL" id="AB576187">
    <property type="protein sequence ID" value="BAJ72588.1"/>
    <property type="molecule type" value="mRNA"/>
</dbReference>
<dbReference type="KEGG" id="ag:BAJ72588"/>
<dbReference type="BioCyc" id="MetaCyc:MONOMER-17759"/>
<dbReference type="BRENDA" id="2.1.1.B83">
    <property type="organism ID" value="11125"/>
</dbReference>
<dbReference type="BRENDA" id="2.1.1.B84">
    <property type="organism ID" value="11125"/>
</dbReference>
<dbReference type="BRENDA" id="2.1.1.B85">
    <property type="organism ID" value="11125"/>
</dbReference>
<dbReference type="GO" id="GO:0005829">
    <property type="term" value="C:cytosol"/>
    <property type="evidence" value="ECO:0000250"/>
    <property type="project" value="UniProtKB"/>
</dbReference>
<dbReference type="GO" id="GO:0008171">
    <property type="term" value="F:O-methyltransferase activity"/>
    <property type="evidence" value="ECO:0000314"/>
    <property type="project" value="UniProtKB"/>
</dbReference>
<dbReference type="GO" id="GO:0046983">
    <property type="term" value="F:protein dimerization activity"/>
    <property type="evidence" value="ECO:0007669"/>
    <property type="project" value="InterPro"/>
</dbReference>
<dbReference type="GO" id="GO:0033075">
    <property type="term" value="P:isoquinoline alkaloid biosynthetic process"/>
    <property type="evidence" value="ECO:0000314"/>
    <property type="project" value="UniProtKB"/>
</dbReference>
<dbReference type="GO" id="GO:0032259">
    <property type="term" value="P:methylation"/>
    <property type="evidence" value="ECO:0000314"/>
    <property type="project" value="UniProtKB"/>
</dbReference>
<dbReference type="CDD" id="cd02440">
    <property type="entry name" value="AdoMet_MTases"/>
    <property type="match status" value="1"/>
</dbReference>
<dbReference type="FunFam" id="3.40.50.150:FF:000057">
    <property type="entry name" value="O-methyltransferase ZRP4"/>
    <property type="match status" value="1"/>
</dbReference>
<dbReference type="Gene3D" id="3.40.50.150">
    <property type="entry name" value="Vaccinia Virus protein VP39"/>
    <property type="match status" value="1"/>
</dbReference>
<dbReference type="Gene3D" id="1.10.10.10">
    <property type="entry name" value="Winged helix-like DNA-binding domain superfamily/Winged helix DNA-binding domain"/>
    <property type="match status" value="1"/>
</dbReference>
<dbReference type="InterPro" id="IPR016461">
    <property type="entry name" value="COMT-like"/>
</dbReference>
<dbReference type="InterPro" id="IPR001077">
    <property type="entry name" value="O_MeTrfase_dom"/>
</dbReference>
<dbReference type="InterPro" id="IPR012967">
    <property type="entry name" value="Plant_O-MeTrfase_dimerisation"/>
</dbReference>
<dbReference type="InterPro" id="IPR029063">
    <property type="entry name" value="SAM-dependent_MTases_sf"/>
</dbReference>
<dbReference type="InterPro" id="IPR036388">
    <property type="entry name" value="WH-like_DNA-bd_sf"/>
</dbReference>
<dbReference type="InterPro" id="IPR036390">
    <property type="entry name" value="WH_DNA-bd_sf"/>
</dbReference>
<dbReference type="PANTHER" id="PTHR11746">
    <property type="entry name" value="O-METHYLTRANSFERASE"/>
    <property type="match status" value="1"/>
</dbReference>
<dbReference type="Pfam" id="PF08100">
    <property type="entry name" value="Dimerisation"/>
    <property type="match status" value="1"/>
</dbReference>
<dbReference type="Pfam" id="PF00891">
    <property type="entry name" value="Methyltransf_2"/>
    <property type="match status" value="1"/>
</dbReference>
<dbReference type="PIRSF" id="PIRSF005739">
    <property type="entry name" value="O-mtase"/>
    <property type="match status" value="1"/>
</dbReference>
<dbReference type="SUPFAM" id="SSF53335">
    <property type="entry name" value="S-adenosyl-L-methionine-dependent methyltransferases"/>
    <property type="match status" value="1"/>
</dbReference>
<dbReference type="SUPFAM" id="SSF46785">
    <property type="entry name" value="Winged helix' DNA-binding domain"/>
    <property type="match status" value="1"/>
</dbReference>
<dbReference type="PROSITE" id="PS51683">
    <property type="entry name" value="SAM_OMT_II"/>
    <property type="match status" value="1"/>
</dbReference>
<evidence type="ECO:0000250" key="1">
    <source>
        <dbReference type="UniProtKB" id="D3KY99"/>
    </source>
</evidence>
<evidence type="ECO:0000250" key="2">
    <source>
        <dbReference type="UniProtKB" id="O24529"/>
    </source>
</evidence>
<evidence type="ECO:0000255" key="3">
    <source>
        <dbReference type="PROSITE-ProRule" id="PRU01020"/>
    </source>
</evidence>
<evidence type="ECO:0000269" key="4">
    <source>
    </source>
</evidence>
<evidence type="ECO:0000303" key="5">
    <source>
    </source>
</evidence>
<evidence type="ECO:0000312" key="6">
    <source>
        <dbReference type="EMBL" id="BAJ72588.1"/>
    </source>
</evidence>
<sequence>METVQSSSSAELLRAQTHFSTQLFSFQNYASLKCALHLGIPDAIKQHGKPMNLSELTSALPIKPSKAPYIHRLMRMLVKAGYFAQENECFDLTPIGLLLLKDDPINIRALVLLELHPALLLPWIALSEWFQNDDATPFVTAHGKSFWDYTSRDPEFRKLFDEAMAGDSELISKVLVTEFKYVFEGLKSLVDVGGGNGTLARSIAKAFPNLKCTVFDLPEAVANEQGDGNLDFVAGDMFDRVPSADAILLKIVLHDWSDENCVKILKNCRKSIPVKDKGGKVIIIEGVVELEKNAGNEYAGLENLDMEMLVLYNSKERTKKEWAKLFSDAGFSDYKFIPALDSWCIIELTP</sequence>